<feature type="chain" id="PRO_0000070882" description="Chaperone protein DnaJ">
    <location>
        <begin position="1"/>
        <end position="379"/>
    </location>
</feature>
<feature type="domain" description="J" evidence="1">
    <location>
        <begin position="5"/>
        <end position="69"/>
    </location>
</feature>
<feature type="repeat" description="CXXCXGXG motif">
    <location>
        <begin position="149"/>
        <end position="156"/>
    </location>
</feature>
<feature type="repeat" description="CXXCXGXG motif">
    <location>
        <begin position="166"/>
        <end position="173"/>
    </location>
</feature>
<feature type="repeat" description="CXXCXGXG motif">
    <location>
        <begin position="192"/>
        <end position="199"/>
    </location>
</feature>
<feature type="repeat" description="CXXCXGXG motif">
    <location>
        <begin position="206"/>
        <end position="213"/>
    </location>
</feature>
<feature type="zinc finger region" description="CR-type" evidence="1">
    <location>
        <begin position="136"/>
        <end position="218"/>
    </location>
</feature>
<feature type="binding site" evidence="1">
    <location>
        <position position="149"/>
    </location>
    <ligand>
        <name>Zn(2+)</name>
        <dbReference type="ChEBI" id="CHEBI:29105"/>
        <label>1</label>
    </ligand>
</feature>
<feature type="binding site" evidence="1">
    <location>
        <position position="152"/>
    </location>
    <ligand>
        <name>Zn(2+)</name>
        <dbReference type="ChEBI" id="CHEBI:29105"/>
        <label>1</label>
    </ligand>
</feature>
<feature type="binding site" evidence="1">
    <location>
        <position position="166"/>
    </location>
    <ligand>
        <name>Zn(2+)</name>
        <dbReference type="ChEBI" id="CHEBI:29105"/>
        <label>2</label>
    </ligand>
</feature>
<feature type="binding site" evidence="1">
    <location>
        <position position="169"/>
    </location>
    <ligand>
        <name>Zn(2+)</name>
        <dbReference type="ChEBI" id="CHEBI:29105"/>
        <label>2</label>
    </ligand>
</feature>
<feature type="binding site" evidence="1">
    <location>
        <position position="192"/>
    </location>
    <ligand>
        <name>Zn(2+)</name>
        <dbReference type="ChEBI" id="CHEBI:29105"/>
        <label>2</label>
    </ligand>
</feature>
<feature type="binding site" evidence="1">
    <location>
        <position position="195"/>
    </location>
    <ligand>
        <name>Zn(2+)</name>
        <dbReference type="ChEBI" id="CHEBI:29105"/>
        <label>2</label>
    </ligand>
</feature>
<feature type="binding site" evidence="1">
    <location>
        <position position="206"/>
    </location>
    <ligand>
        <name>Zn(2+)</name>
        <dbReference type="ChEBI" id="CHEBI:29105"/>
        <label>1</label>
    </ligand>
</feature>
<feature type="binding site" evidence="1">
    <location>
        <position position="209"/>
    </location>
    <ligand>
        <name>Zn(2+)</name>
        <dbReference type="ChEBI" id="CHEBI:29105"/>
        <label>1</label>
    </ligand>
</feature>
<organism>
    <name type="scientific">Staphylococcus aureus (strain COL)</name>
    <dbReference type="NCBI Taxonomy" id="93062"/>
    <lineage>
        <taxon>Bacteria</taxon>
        <taxon>Bacillati</taxon>
        <taxon>Bacillota</taxon>
        <taxon>Bacilli</taxon>
        <taxon>Bacillales</taxon>
        <taxon>Staphylococcaceae</taxon>
        <taxon>Staphylococcus</taxon>
    </lineage>
</organism>
<keyword id="KW-0143">Chaperone</keyword>
<keyword id="KW-0963">Cytoplasm</keyword>
<keyword id="KW-0235">DNA replication</keyword>
<keyword id="KW-0479">Metal-binding</keyword>
<keyword id="KW-0677">Repeat</keyword>
<keyword id="KW-0346">Stress response</keyword>
<keyword id="KW-0862">Zinc</keyword>
<keyword id="KW-0863">Zinc-finger</keyword>
<dbReference type="EMBL" id="CP000046">
    <property type="protein sequence ID" value="AAW38252.1"/>
    <property type="molecule type" value="Genomic_DNA"/>
</dbReference>
<dbReference type="RefSeq" id="WP_001119021.1">
    <property type="nucleotide sequence ID" value="NZ_JBGOFO010000003.1"/>
</dbReference>
<dbReference type="SMR" id="Q5HFI1"/>
<dbReference type="KEGG" id="sac:SACOL1636"/>
<dbReference type="HOGENOM" id="CLU_017633_0_7_9"/>
<dbReference type="Proteomes" id="UP000000530">
    <property type="component" value="Chromosome"/>
</dbReference>
<dbReference type="GO" id="GO:0005737">
    <property type="term" value="C:cytoplasm"/>
    <property type="evidence" value="ECO:0007669"/>
    <property type="project" value="UniProtKB-SubCell"/>
</dbReference>
<dbReference type="GO" id="GO:0005524">
    <property type="term" value="F:ATP binding"/>
    <property type="evidence" value="ECO:0007669"/>
    <property type="project" value="InterPro"/>
</dbReference>
<dbReference type="GO" id="GO:0031072">
    <property type="term" value="F:heat shock protein binding"/>
    <property type="evidence" value="ECO:0007669"/>
    <property type="project" value="InterPro"/>
</dbReference>
<dbReference type="GO" id="GO:0051082">
    <property type="term" value="F:unfolded protein binding"/>
    <property type="evidence" value="ECO:0007669"/>
    <property type="project" value="UniProtKB-UniRule"/>
</dbReference>
<dbReference type="GO" id="GO:0008270">
    <property type="term" value="F:zinc ion binding"/>
    <property type="evidence" value="ECO:0007669"/>
    <property type="project" value="UniProtKB-UniRule"/>
</dbReference>
<dbReference type="GO" id="GO:0051085">
    <property type="term" value="P:chaperone cofactor-dependent protein refolding"/>
    <property type="evidence" value="ECO:0007669"/>
    <property type="project" value="TreeGrafter"/>
</dbReference>
<dbReference type="GO" id="GO:0006260">
    <property type="term" value="P:DNA replication"/>
    <property type="evidence" value="ECO:0007669"/>
    <property type="project" value="UniProtKB-KW"/>
</dbReference>
<dbReference type="GO" id="GO:0042026">
    <property type="term" value="P:protein refolding"/>
    <property type="evidence" value="ECO:0007669"/>
    <property type="project" value="TreeGrafter"/>
</dbReference>
<dbReference type="GO" id="GO:0009408">
    <property type="term" value="P:response to heat"/>
    <property type="evidence" value="ECO:0007669"/>
    <property type="project" value="InterPro"/>
</dbReference>
<dbReference type="CDD" id="cd06257">
    <property type="entry name" value="DnaJ"/>
    <property type="match status" value="1"/>
</dbReference>
<dbReference type="CDD" id="cd10747">
    <property type="entry name" value="DnaJ_C"/>
    <property type="match status" value="1"/>
</dbReference>
<dbReference type="CDD" id="cd10719">
    <property type="entry name" value="DnaJ_zf"/>
    <property type="match status" value="1"/>
</dbReference>
<dbReference type="FunFam" id="1.10.287.110:FF:000031">
    <property type="entry name" value="Molecular chaperone DnaJ"/>
    <property type="match status" value="1"/>
</dbReference>
<dbReference type="FunFam" id="2.10.230.10:FF:000002">
    <property type="entry name" value="Molecular chaperone DnaJ"/>
    <property type="match status" value="1"/>
</dbReference>
<dbReference type="FunFam" id="2.60.260.20:FF:000004">
    <property type="entry name" value="Molecular chaperone DnaJ"/>
    <property type="match status" value="1"/>
</dbReference>
<dbReference type="Gene3D" id="1.10.287.110">
    <property type="entry name" value="DnaJ domain"/>
    <property type="match status" value="1"/>
</dbReference>
<dbReference type="Gene3D" id="2.10.230.10">
    <property type="entry name" value="Heat shock protein DnaJ, cysteine-rich domain"/>
    <property type="match status" value="1"/>
</dbReference>
<dbReference type="Gene3D" id="2.60.260.20">
    <property type="entry name" value="Urease metallochaperone UreE, N-terminal domain"/>
    <property type="match status" value="2"/>
</dbReference>
<dbReference type="HAMAP" id="MF_01152">
    <property type="entry name" value="DnaJ"/>
    <property type="match status" value="1"/>
</dbReference>
<dbReference type="InterPro" id="IPR012724">
    <property type="entry name" value="DnaJ"/>
</dbReference>
<dbReference type="InterPro" id="IPR002939">
    <property type="entry name" value="DnaJ_C"/>
</dbReference>
<dbReference type="InterPro" id="IPR001623">
    <property type="entry name" value="DnaJ_domain"/>
</dbReference>
<dbReference type="InterPro" id="IPR018253">
    <property type="entry name" value="DnaJ_domain_CS"/>
</dbReference>
<dbReference type="InterPro" id="IPR008971">
    <property type="entry name" value="HSP40/DnaJ_pept-bd"/>
</dbReference>
<dbReference type="InterPro" id="IPR001305">
    <property type="entry name" value="HSP_DnaJ_Cys-rich_dom"/>
</dbReference>
<dbReference type="InterPro" id="IPR036410">
    <property type="entry name" value="HSP_DnaJ_Cys-rich_dom_sf"/>
</dbReference>
<dbReference type="InterPro" id="IPR036869">
    <property type="entry name" value="J_dom_sf"/>
</dbReference>
<dbReference type="NCBIfam" id="TIGR02349">
    <property type="entry name" value="DnaJ_bact"/>
    <property type="match status" value="1"/>
</dbReference>
<dbReference type="NCBIfam" id="NF008035">
    <property type="entry name" value="PRK10767.1"/>
    <property type="match status" value="1"/>
</dbReference>
<dbReference type="NCBIfam" id="NF010873">
    <property type="entry name" value="PRK14280.1"/>
    <property type="match status" value="1"/>
</dbReference>
<dbReference type="PANTHER" id="PTHR43096:SF48">
    <property type="entry name" value="CHAPERONE PROTEIN DNAJ"/>
    <property type="match status" value="1"/>
</dbReference>
<dbReference type="PANTHER" id="PTHR43096">
    <property type="entry name" value="DNAJ HOMOLOG 1, MITOCHONDRIAL-RELATED"/>
    <property type="match status" value="1"/>
</dbReference>
<dbReference type="Pfam" id="PF00226">
    <property type="entry name" value="DnaJ"/>
    <property type="match status" value="1"/>
</dbReference>
<dbReference type="Pfam" id="PF01556">
    <property type="entry name" value="DnaJ_C"/>
    <property type="match status" value="1"/>
</dbReference>
<dbReference type="Pfam" id="PF00684">
    <property type="entry name" value="DnaJ_CXXCXGXG"/>
    <property type="match status" value="1"/>
</dbReference>
<dbReference type="PRINTS" id="PR00625">
    <property type="entry name" value="JDOMAIN"/>
</dbReference>
<dbReference type="SMART" id="SM00271">
    <property type="entry name" value="DnaJ"/>
    <property type="match status" value="1"/>
</dbReference>
<dbReference type="SUPFAM" id="SSF46565">
    <property type="entry name" value="Chaperone J-domain"/>
    <property type="match status" value="1"/>
</dbReference>
<dbReference type="SUPFAM" id="SSF57938">
    <property type="entry name" value="DnaJ/Hsp40 cysteine-rich domain"/>
    <property type="match status" value="1"/>
</dbReference>
<dbReference type="SUPFAM" id="SSF49493">
    <property type="entry name" value="HSP40/DnaJ peptide-binding domain"/>
    <property type="match status" value="2"/>
</dbReference>
<dbReference type="PROSITE" id="PS00636">
    <property type="entry name" value="DNAJ_1"/>
    <property type="match status" value="1"/>
</dbReference>
<dbReference type="PROSITE" id="PS50076">
    <property type="entry name" value="DNAJ_2"/>
    <property type="match status" value="1"/>
</dbReference>
<dbReference type="PROSITE" id="PS51188">
    <property type="entry name" value="ZF_CR"/>
    <property type="match status" value="1"/>
</dbReference>
<reference key="1">
    <citation type="journal article" date="2005" name="J. Bacteriol.">
        <title>Insights on evolution of virulence and resistance from the complete genome analysis of an early methicillin-resistant Staphylococcus aureus strain and a biofilm-producing methicillin-resistant Staphylococcus epidermidis strain.</title>
        <authorList>
            <person name="Gill S.R."/>
            <person name="Fouts D.E."/>
            <person name="Archer G.L."/>
            <person name="Mongodin E.F."/>
            <person name="DeBoy R.T."/>
            <person name="Ravel J."/>
            <person name="Paulsen I.T."/>
            <person name="Kolonay J.F."/>
            <person name="Brinkac L.M."/>
            <person name="Beanan M.J."/>
            <person name="Dodson R.J."/>
            <person name="Daugherty S.C."/>
            <person name="Madupu R."/>
            <person name="Angiuoli S.V."/>
            <person name="Durkin A.S."/>
            <person name="Haft D.H."/>
            <person name="Vamathevan J.J."/>
            <person name="Khouri H."/>
            <person name="Utterback T.R."/>
            <person name="Lee C."/>
            <person name="Dimitrov G."/>
            <person name="Jiang L."/>
            <person name="Qin H."/>
            <person name="Weidman J."/>
            <person name="Tran K."/>
            <person name="Kang K.H."/>
            <person name="Hance I.R."/>
            <person name="Nelson K.E."/>
            <person name="Fraser C.M."/>
        </authorList>
    </citation>
    <scope>NUCLEOTIDE SEQUENCE [LARGE SCALE GENOMIC DNA]</scope>
    <source>
        <strain>COL</strain>
    </source>
</reference>
<protein>
    <recommendedName>
        <fullName evidence="1">Chaperone protein DnaJ</fullName>
    </recommendedName>
</protein>
<name>DNAJ_STAAC</name>
<comment type="function">
    <text evidence="1">Participates actively in the response to hyperosmotic and heat shock by preventing the aggregation of stress-denatured proteins and by disaggregating proteins, also in an autonomous, DnaK-independent fashion. Unfolded proteins bind initially to DnaJ; upon interaction with the DnaJ-bound protein, DnaK hydrolyzes its bound ATP, resulting in the formation of a stable complex. GrpE releases ADP from DnaK; ATP binding to DnaK triggers the release of the substrate protein, thus completing the reaction cycle. Several rounds of ATP-dependent interactions between DnaJ, DnaK and GrpE are required for fully efficient folding. Also involved, together with DnaK and GrpE, in the DNA replication of plasmids through activation of initiation proteins.</text>
</comment>
<comment type="cofactor">
    <cofactor evidence="1">
        <name>Zn(2+)</name>
        <dbReference type="ChEBI" id="CHEBI:29105"/>
    </cofactor>
    <text evidence="1">Binds 2 Zn(2+) ions per monomer.</text>
</comment>
<comment type="subunit">
    <text evidence="1">Homodimer.</text>
</comment>
<comment type="subcellular location">
    <subcellularLocation>
        <location evidence="1">Cytoplasm</location>
    </subcellularLocation>
</comment>
<comment type="domain">
    <text evidence="1">The J domain is necessary and sufficient to stimulate DnaK ATPase activity. Zinc center 1 plays an important role in the autonomous, DnaK-independent chaperone activity of DnaJ. Zinc center 2 is essential for interaction with DnaK and for DnaJ activity.</text>
</comment>
<comment type="similarity">
    <text evidence="1">Belongs to the DnaJ family.</text>
</comment>
<sequence>MAKRDYYEVLGISKDASKDEIKKAYRKLSKKYHPDINKEEGADEKFKEISEAYEVLSDDNKRASYDQFGHDGPQGFGGQGFNGSDFGGFSGFGGGGFEDIFSSFFGGGRQRDPNAPQKGDDLQYTMTLTFEEAVFGTTKEISIRKDVTCETCHGDGAKPGTSKKTCSYCNGAGHVAVEQNTILGRVRTEQVCPKCNGSGQEFEEACPTCHGKGTENKTVKLEVKVPEGVDNEQQIRLAGEGSPGVNGGPAGDLYVVFRVKPSETFKRDGDDIYYKLNVSFPQAALGDEIKIPTLNNEVMLTIPAGTQTGKQFRLKEKGIKNVHGYGYGDLYVDIKVVTPTKLTDRQKELMKEFAQLNGEEINEQPSNFKDRAKRFFKGE</sequence>
<accession>Q5HFI1</accession>
<evidence type="ECO:0000255" key="1">
    <source>
        <dbReference type="HAMAP-Rule" id="MF_01152"/>
    </source>
</evidence>
<proteinExistence type="inferred from homology"/>
<gene>
    <name evidence="1" type="primary">dnaJ</name>
    <name type="ordered locus">SACOL1636</name>
</gene>